<organism>
    <name type="scientific">Oryza sativa subsp. japonica</name>
    <name type="common">Rice</name>
    <dbReference type="NCBI Taxonomy" id="39947"/>
    <lineage>
        <taxon>Eukaryota</taxon>
        <taxon>Viridiplantae</taxon>
        <taxon>Streptophyta</taxon>
        <taxon>Embryophyta</taxon>
        <taxon>Tracheophyta</taxon>
        <taxon>Spermatophyta</taxon>
        <taxon>Magnoliopsida</taxon>
        <taxon>Liliopsida</taxon>
        <taxon>Poales</taxon>
        <taxon>Poaceae</taxon>
        <taxon>BOP clade</taxon>
        <taxon>Oryzoideae</taxon>
        <taxon>Oryzeae</taxon>
        <taxon>Oryzinae</taxon>
        <taxon>Oryza</taxon>
        <taxon>Oryza sativa</taxon>
    </lineage>
</organism>
<keyword id="KW-0106">Calcium</keyword>
<keyword id="KW-0150">Chloroplast</keyword>
<keyword id="KW-0349">Heme</keyword>
<keyword id="KW-0376">Hydrogen peroxide</keyword>
<keyword id="KW-0408">Iron</keyword>
<keyword id="KW-0479">Metal-binding</keyword>
<keyword id="KW-0560">Oxidoreductase</keyword>
<keyword id="KW-0575">Peroxidase</keyword>
<keyword id="KW-0934">Plastid</keyword>
<keyword id="KW-0630">Potassium</keyword>
<keyword id="KW-1185">Reference proteome</keyword>
<keyword id="KW-0809">Transit peptide</keyword>
<evidence type="ECO:0000250" key="1"/>
<evidence type="ECO:0000255" key="2"/>
<evidence type="ECO:0000255" key="3">
    <source>
        <dbReference type="PROSITE-ProRule" id="PRU00297"/>
    </source>
</evidence>
<evidence type="ECO:0000256" key="4">
    <source>
        <dbReference type="SAM" id="MobiDB-lite"/>
    </source>
</evidence>
<evidence type="ECO:0000269" key="5">
    <source>
    </source>
</evidence>
<evidence type="ECO:0000269" key="6">
    <source>
    </source>
</evidence>
<evidence type="ECO:0000303" key="7">
    <source>
    </source>
</evidence>
<evidence type="ECO:0000305" key="8"/>
<evidence type="ECO:0000312" key="9">
    <source>
        <dbReference type="EMBL" id="ABA96618.1"/>
    </source>
</evidence>
<evidence type="ECO:0000312" key="10">
    <source>
        <dbReference type="EMBL" id="BAT16123.1"/>
    </source>
</evidence>
<dbReference type="EC" id="1.11.1.11" evidence="8"/>
<dbReference type="EMBL" id="DP000011">
    <property type="protein sequence ID" value="ABA96618.1"/>
    <property type="molecule type" value="Genomic_DNA"/>
</dbReference>
<dbReference type="EMBL" id="AP008218">
    <property type="protein sequence ID" value="BAF29325.1"/>
    <property type="molecule type" value="Genomic_DNA"/>
</dbReference>
<dbReference type="EMBL" id="AP014968">
    <property type="protein sequence ID" value="BAT16123.1"/>
    <property type="molecule type" value="Genomic_DNA"/>
</dbReference>
<dbReference type="EMBL" id="AK073910">
    <property type="status" value="NOT_ANNOTATED_CDS"/>
    <property type="molecule type" value="mRNA"/>
</dbReference>
<dbReference type="RefSeq" id="XP_015618477.1">
    <property type="nucleotide sequence ID" value="XM_015762991.1"/>
</dbReference>
<dbReference type="SMR" id="P0C0L0"/>
<dbReference type="FunCoup" id="P0C0L0">
    <property type="interactions" value="161"/>
</dbReference>
<dbReference type="STRING" id="39947.P0C0L0"/>
<dbReference type="PeroxiBase" id="1869">
    <property type="entry name" value="OsAPx05"/>
</dbReference>
<dbReference type="PaxDb" id="39947-P0C0L0"/>
<dbReference type="EnsemblPlants" id="Os12t0178200-01">
    <property type="protein sequence ID" value="Os12t0178200-01"/>
    <property type="gene ID" value="Os12g0178200"/>
</dbReference>
<dbReference type="Gramene" id="Os12t0178200-01">
    <property type="protein sequence ID" value="Os12t0178200-01"/>
    <property type="gene ID" value="Os12g0178200"/>
</dbReference>
<dbReference type="KEGG" id="dosa:Os12g0178200"/>
<dbReference type="eggNOG" id="ENOG502QS7Q">
    <property type="taxonomic scope" value="Eukaryota"/>
</dbReference>
<dbReference type="HOGENOM" id="CLU_036959_2_1_1"/>
<dbReference type="InParanoid" id="P0C0L0"/>
<dbReference type="OMA" id="TASTCWH"/>
<dbReference type="OrthoDB" id="2859658at2759"/>
<dbReference type="BRENDA" id="1.11.1.11">
    <property type="organism ID" value="4460"/>
</dbReference>
<dbReference type="Proteomes" id="UP000000763">
    <property type="component" value="Chromosome 12"/>
</dbReference>
<dbReference type="Proteomes" id="UP000059680">
    <property type="component" value="Chromosome 12"/>
</dbReference>
<dbReference type="GO" id="GO:0009570">
    <property type="term" value="C:chloroplast stroma"/>
    <property type="evidence" value="ECO:0007669"/>
    <property type="project" value="UniProtKB-SubCell"/>
</dbReference>
<dbReference type="GO" id="GO:0020037">
    <property type="term" value="F:heme binding"/>
    <property type="evidence" value="ECO:0007669"/>
    <property type="project" value="InterPro"/>
</dbReference>
<dbReference type="GO" id="GO:0016688">
    <property type="term" value="F:L-ascorbate peroxidase activity"/>
    <property type="evidence" value="ECO:0007669"/>
    <property type="project" value="UniProtKB-EC"/>
</dbReference>
<dbReference type="GO" id="GO:0046872">
    <property type="term" value="F:metal ion binding"/>
    <property type="evidence" value="ECO:0007669"/>
    <property type="project" value="UniProtKB-KW"/>
</dbReference>
<dbReference type="GO" id="GO:0004601">
    <property type="term" value="F:peroxidase activity"/>
    <property type="evidence" value="ECO:0000318"/>
    <property type="project" value="GO_Central"/>
</dbReference>
<dbReference type="GO" id="GO:0034599">
    <property type="term" value="P:cellular response to oxidative stress"/>
    <property type="evidence" value="ECO:0000318"/>
    <property type="project" value="GO_Central"/>
</dbReference>
<dbReference type="GO" id="GO:0042744">
    <property type="term" value="P:hydrogen peroxide catabolic process"/>
    <property type="evidence" value="ECO:0000318"/>
    <property type="project" value="GO_Central"/>
</dbReference>
<dbReference type="GO" id="GO:0000302">
    <property type="term" value="P:response to reactive oxygen species"/>
    <property type="evidence" value="ECO:0000318"/>
    <property type="project" value="GO_Central"/>
</dbReference>
<dbReference type="CDD" id="cd00691">
    <property type="entry name" value="ascorbate_peroxidase"/>
    <property type="match status" value="1"/>
</dbReference>
<dbReference type="FunFam" id="1.10.520.10:FF:000007">
    <property type="entry name" value="L-ascorbate peroxidase S chloroplastic/mitochondrial"/>
    <property type="match status" value="1"/>
</dbReference>
<dbReference type="FunFam" id="1.10.420.10:FF:000005">
    <property type="entry name" value="L-ascorbate peroxidase T, chloroplastic"/>
    <property type="match status" value="1"/>
</dbReference>
<dbReference type="Gene3D" id="1.10.520.10">
    <property type="match status" value="1"/>
</dbReference>
<dbReference type="Gene3D" id="1.10.420.10">
    <property type="entry name" value="Peroxidase, domain 2"/>
    <property type="match status" value="1"/>
</dbReference>
<dbReference type="InterPro" id="IPR044831">
    <property type="entry name" value="Ccp1-like"/>
</dbReference>
<dbReference type="InterPro" id="IPR002016">
    <property type="entry name" value="Haem_peroxidase"/>
</dbReference>
<dbReference type="InterPro" id="IPR010255">
    <property type="entry name" value="Haem_peroxidase_sf"/>
</dbReference>
<dbReference type="InterPro" id="IPR002207">
    <property type="entry name" value="Peroxidase_I"/>
</dbReference>
<dbReference type="InterPro" id="IPR019793">
    <property type="entry name" value="Peroxidases_heam-ligand_BS"/>
</dbReference>
<dbReference type="PANTHER" id="PTHR31356:SF1">
    <property type="entry name" value="L-ASCORBATE PEROXIDASE S, CHLOROPLASTIC_MITOCHONDRIAL"/>
    <property type="match status" value="1"/>
</dbReference>
<dbReference type="PANTHER" id="PTHR31356">
    <property type="entry name" value="THYLAKOID LUMENAL 29 KDA PROTEIN, CHLOROPLASTIC-RELATED"/>
    <property type="match status" value="1"/>
</dbReference>
<dbReference type="Pfam" id="PF00141">
    <property type="entry name" value="peroxidase"/>
    <property type="match status" value="1"/>
</dbReference>
<dbReference type="PRINTS" id="PR00459">
    <property type="entry name" value="ASPEROXIDASE"/>
</dbReference>
<dbReference type="PRINTS" id="PR00458">
    <property type="entry name" value="PEROXIDASE"/>
</dbReference>
<dbReference type="SUPFAM" id="SSF48113">
    <property type="entry name" value="Heme-dependent peroxidases"/>
    <property type="match status" value="1"/>
</dbReference>
<dbReference type="PROSITE" id="PS00435">
    <property type="entry name" value="PEROXIDASE_1"/>
    <property type="match status" value="1"/>
</dbReference>
<dbReference type="PROSITE" id="PS50873">
    <property type="entry name" value="PEROXIDASE_4"/>
    <property type="match status" value="1"/>
</dbReference>
<gene>
    <name evidence="7" type="primary">APX5</name>
    <name evidence="10" type="ordered locus">Os12g0178200</name>
    <name evidence="9" type="ordered locus">LOC_Os12g07830</name>
</gene>
<reference key="1">
    <citation type="journal article" date="2005" name="BMC Biol.">
        <title>The sequence of rice chromosomes 11 and 12, rich in disease resistance genes and recent gene duplications.</title>
        <authorList>
            <consortium name="The rice chromosomes 11 and 12 sequencing consortia"/>
        </authorList>
    </citation>
    <scope>NUCLEOTIDE SEQUENCE [LARGE SCALE GENOMIC DNA]</scope>
    <source>
        <strain>cv. Nipponbare</strain>
    </source>
</reference>
<reference key="2">
    <citation type="journal article" date="2005" name="Nature">
        <title>The map-based sequence of the rice genome.</title>
        <authorList>
            <consortium name="International rice genome sequencing project (IRGSP)"/>
        </authorList>
    </citation>
    <scope>NUCLEOTIDE SEQUENCE [LARGE SCALE GENOMIC DNA]</scope>
    <source>
        <strain>cv. Nipponbare</strain>
    </source>
</reference>
<reference key="3">
    <citation type="journal article" date="2008" name="Nucleic Acids Res.">
        <title>The rice annotation project database (RAP-DB): 2008 update.</title>
        <authorList>
            <consortium name="The rice annotation project (RAP)"/>
        </authorList>
    </citation>
    <scope>GENOME REANNOTATION</scope>
    <source>
        <strain>cv. Nipponbare</strain>
    </source>
</reference>
<reference key="4">
    <citation type="journal article" date="2013" name="Rice">
        <title>Improvement of the Oryza sativa Nipponbare reference genome using next generation sequence and optical map data.</title>
        <authorList>
            <person name="Kawahara Y."/>
            <person name="de la Bastide M."/>
            <person name="Hamilton J.P."/>
            <person name="Kanamori H."/>
            <person name="McCombie W.R."/>
            <person name="Ouyang S."/>
            <person name="Schwartz D.C."/>
            <person name="Tanaka T."/>
            <person name="Wu J."/>
            <person name="Zhou S."/>
            <person name="Childs K.L."/>
            <person name="Davidson R.M."/>
            <person name="Lin H."/>
            <person name="Quesada-Ocampo L."/>
            <person name="Vaillancourt B."/>
            <person name="Sakai H."/>
            <person name="Lee S.S."/>
            <person name="Kim J."/>
            <person name="Numa H."/>
            <person name="Itoh T."/>
            <person name="Buell C.R."/>
            <person name="Matsumoto T."/>
        </authorList>
    </citation>
    <scope>GENOME REANNOTATION</scope>
    <source>
        <strain>cv. Nipponbare</strain>
    </source>
</reference>
<reference key="5">
    <citation type="journal article" date="2003" name="Science">
        <title>Collection, mapping, and annotation of over 28,000 cDNA clones from japonica rice.</title>
        <authorList>
            <consortium name="The rice full-length cDNA consortium"/>
        </authorList>
    </citation>
    <scope>NUCLEOTIDE SEQUENCE [LARGE SCALE MRNA]</scope>
    <source>
        <strain>cv. Nipponbare</strain>
    </source>
</reference>
<reference key="6">
    <citation type="journal article" date="2004" name="J. Mol. Evol.">
        <title>Analysis of the molecular evolutionary history of the ascorbate peroxidase gene family: inferences from the rice genome.</title>
        <authorList>
            <person name="Teixeira F.K."/>
            <person name="Menezes-Benavente L."/>
            <person name="Margis R."/>
            <person name="Margis-Pinheiro M."/>
        </authorList>
    </citation>
    <scope>NOMENCLATURE</scope>
</reference>
<reference key="7">
    <citation type="journal article" date="2006" name="Planta">
        <title>Rice ascorbate peroxidase gene family encodes functionally diverse isoforms localized in different subcellular compartments.</title>
        <authorList>
            <person name="Teixeira F.K."/>
            <person name="Menezes-Benavente L."/>
            <person name="Galvao V.C."/>
            <person name="Margis R."/>
            <person name="Margis-Pinheiro M."/>
        </authorList>
    </citation>
    <scope>TISSUE SPECIFICITY</scope>
</reference>
<reference key="8">
    <citation type="journal article" date="2015" name="J. Plant Physiol.">
        <title>Transcriptional profile of genes involved in ascorbate glutathione cycle in senescing leaves for an early senescence leaf (esl) rice mutant.</title>
        <authorList>
            <person name="Li Z."/>
            <person name="Su D."/>
            <person name="Lei B."/>
            <person name="Wang F."/>
            <person name="Geng W."/>
            <person name="Pan G."/>
            <person name="Cheng F."/>
        </authorList>
    </citation>
    <scope>INDUCTION</scope>
</reference>
<sequence>MAVVHRILRRGLSAASPLPSLRGLLLVSPQELGRRPASSSSSAAAAAGDVEAELRAAREDVRQLLKSNPCHPILVRLGWHDAGTYDKNITEWPKCGGANGSLRFGVELVHAANKGLLKALFLVIPIKSKYAGVTYADIFQLASATAIEEAGGPKIPMIYGRADVADGEECPPEGRLPAADPPSPAEHLREVFYRMGLSDKEIVALSGAHTLGRARPERSGWGKPETKYTENGPGAPGGQSWTSEWLKFDNSYFKEIKERRDEDLLVLPTDAVLFEDSSFKIHAEKYAEDQDAFFEDYAEAHAKLSNLGAKFDPPKGISLE</sequence>
<proteinExistence type="evidence at transcript level"/>
<accession>P0C0L0</accession>
<accession>A0A0P0Y7Q3</accession>
<accession>Q2QWY1</accession>
<protein>
    <recommendedName>
        <fullName evidence="8">Probable L-ascorbate peroxidase 5, chloroplastic</fullName>
        <ecNumber evidence="8">1.11.1.11</ecNumber>
    </recommendedName>
    <alternativeName>
        <fullName evidence="7">OsAPx5</fullName>
    </alternativeName>
</protein>
<comment type="function">
    <text evidence="1">Plays a key role in hydrogen peroxide removal.</text>
</comment>
<comment type="catalytic activity">
    <reaction evidence="8">
        <text>L-ascorbate + H2O2 = L-dehydroascorbate + 2 H2O</text>
        <dbReference type="Rhea" id="RHEA:22996"/>
        <dbReference type="ChEBI" id="CHEBI:15377"/>
        <dbReference type="ChEBI" id="CHEBI:16240"/>
        <dbReference type="ChEBI" id="CHEBI:38290"/>
        <dbReference type="ChEBI" id="CHEBI:58539"/>
        <dbReference type="EC" id="1.11.1.11"/>
    </reaction>
</comment>
<comment type="cofactor">
    <cofactor evidence="1">
        <name>heme b</name>
        <dbReference type="ChEBI" id="CHEBI:60344"/>
    </cofactor>
    <text evidence="1">Binds 1 heme b (iron(II)-protoporphyrin IX) group.</text>
</comment>
<comment type="subcellular location">
    <subcellularLocation>
        <location evidence="8">Plastid</location>
        <location evidence="8">Chloroplast stroma</location>
    </subcellularLocation>
</comment>
<comment type="tissue specificity">
    <text evidence="5">Expressed in leaves, stems and flowers.</text>
</comment>
<comment type="induction">
    <text evidence="6">Down-regulated by hydrogen peroxide in leaves.</text>
</comment>
<comment type="miscellaneous">
    <text evidence="1">Binds one cation per subunit; probably K(+), but might also be Ca(2+).</text>
</comment>
<comment type="similarity">
    <text evidence="8">Belongs to the peroxidase family. Ascorbate peroxidase subfamily.</text>
</comment>
<name>APX5_ORYSJ</name>
<feature type="transit peptide" description="Chloroplast" evidence="2">
    <location>
        <begin position="1"/>
        <end position="42"/>
    </location>
</feature>
<feature type="chain" id="PRO_0000042655" description="Probable L-ascorbate peroxidase 5, chloroplastic">
    <location>
        <begin position="43"/>
        <end position="320"/>
    </location>
</feature>
<feature type="region of interest" description="Disordered" evidence="4">
    <location>
        <begin position="213"/>
        <end position="241"/>
    </location>
</feature>
<feature type="compositionally biased region" description="Basic and acidic residues" evidence="4">
    <location>
        <begin position="214"/>
        <end position="228"/>
    </location>
</feature>
<feature type="active site" description="Proton acceptor" evidence="3">
    <location>
        <position position="80"/>
    </location>
</feature>
<feature type="binding site" description="axial binding residue" evidence="3">
    <location>
        <position position="209"/>
    </location>
    <ligand>
        <name>heme b</name>
        <dbReference type="ChEBI" id="CHEBI:60344"/>
    </ligand>
    <ligandPart>
        <name>Fe</name>
        <dbReference type="ChEBI" id="CHEBI:18248"/>
    </ligandPart>
</feature>
<feature type="binding site" evidence="1">
    <location>
        <position position="210"/>
    </location>
    <ligand>
        <name>K(+)</name>
        <dbReference type="ChEBI" id="CHEBI:29103"/>
    </ligand>
</feature>
<feature type="binding site" evidence="1">
    <location>
        <position position="242"/>
    </location>
    <ligand>
        <name>K(+)</name>
        <dbReference type="ChEBI" id="CHEBI:29103"/>
    </ligand>
</feature>
<feature type="binding site" evidence="1">
    <location>
        <position position="249"/>
    </location>
    <ligand>
        <name>K(+)</name>
        <dbReference type="ChEBI" id="CHEBI:29103"/>
    </ligand>
</feature>
<feature type="site" description="Transition state stabilizer" evidence="3">
    <location>
        <position position="76"/>
    </location>
</feature>
<feature type="sequence conflict" description="In Ref. 5; AK073910." evidence="8" ref="5">
    <original>P</original>
    <variation>Q</variation>
    <location>
        <position position="181"/>
    </location>
</feature>